<keyword id="KW-0067">ATP-binding</keyword>
<keyword id="KW-0131">Cell cycle</keyword>
<keyword id="KW-0132">Cell division</keyword>
<keyword id="KW-0133">Cell shape</keyword>
<keyword id="KW-0961">Cell wall biogenesis/degradation</keyword>
<keyword id="KW-0963">Cytoplasm</keyword>
<keyword id="KW-0436">Ligase</keyword>
<keyword id="KW-0547">Nucleotide-binding</keyword>
<keyword id="KW-0573">Peptidoglycan synthesis</keyword>
<keyword id="KW-1185">Reference proteome</keyword>
<comment type="function">
    <text evidence="1">Catalyzes the addition of L-lysine to the nucleotide precursor UDP-N-acetylmuramoyl-L-alanyl-D-glutamate (UMAG) in the biosynthesis of bacterial cell-wall peptidoglycan.</text>
</comment>
<comment type="catalytic activity">
    <reaction evidence="1">
        <text>UDP-N-acetyl-alpha-D-muramoyl-L-alanyl-D-glutamate + L-lysine + ATP = UDP-N-acetyl-alpha-D-muramoyl-L-alanyl-gamma-D-glutamyl-L-lysine + ADP + phosphate + H(+)</text>
        <dbReference type="Rhea" id="RHEA:17969"/>
        <dbReference type="ChEBI" id="CHEBI:15378"/>
        <dbReference type="ChEBI" id="CHEBI:30616"/>
        <dbReference type="ChEBI" id="CHEBI:32551"/>
        <dbReference type="ChEBI" id="CHEBI:43474"/>
        <dbReference type="ChEBI" id="CHEBI:83900"/>
        <dbReference type="ChEBI" id="CHEBI:83903"/>
        <dbReference type="ChEBI" id="CHEBI:456216"/>
        <dbReference type="EC" id="6.3.2.7"/>
    </reaction>
</comment>
<comment type="pathway">
    <text evidence="1">Cell wall biogenesis; peptidoglycan biosynthesis.</text>
</comment>
<comment type="subcellular location">
    <subcellularLocation>
        <location evidence="1">Cytoplasm</location>
    </subcellularLocation>
</comment>
<comment type="PTM">
    <text evidence="1">Carboxylation is probably crucial for Mg(2+) binding and, consequently, for the gamma-phosphate positioning of ATP.</text>
</comment>
<comment type="similarity">
    <text evidence="1">Belongs to the MurCDEF family. MurE subfamily.</text>
</comment>
<proteinExistence type="inferred from homology"/>
<dbReference type="EC" id="6.3.2.7" evidence="1"/>
<dbReference type="EMBL" id="AE016830">
    <property type="protein sequence ID" value="AAO80491.1"/>
    <property type="molecule type" value="Genomic_DNA"/>
</dbReference>
<dbReference type="RefSeq" id="NP_814420.1">
    <property type="nucleotide sequence ID" value="NC_004668.1"/>
</dbReference>
<dbReference type="RefSeq" id="WP_002371461.1">
    <property type="nucleotide sequence ID" value="NZ_KE136527.1"/>
</dbReference>
<dbReference type="SMR" id="Q838A4"/>
<dbReference type="STRING" id="226185.EF_0668"/>
<dbReference type="EnsemblBacteria" id="AAO80491">
    <property type="protein sequence ID" value="AAO80491"/>
    <property type="gene ID" value="EF_0668"/>
</dbReference>
<dbReference type="KEGG" id="efa:EF0668"/>
<dbReference type="PATRIC" id="fig|226185.45.peg.2610"/>
<dbReference type="eggNOG" id="COG0769">
    <property type="taxonomic scope" value="Bacteria"/>
</dbReference>
<dbReference type="HOGENOM" id="CLU_022291_4_2_9"/>
<dbReference type="UniPathway" id="UPA00219"/>
<dbReference type="Proteomes" id="UP000001415">
    <property type="component" value="Chromosome"/>
</dbReference>
<dbReference type="GO" id="GO:0005737">
    <property type="term" value="C:cytoplasm"/>
    <property type="evidence" value="ECO:0007669"/>
    <property type="project" value="UniProtKB-SubCell"/>
</dbReference>
<dbReference type="GO" id="GO:0005524">
    <property type="term" value="F:ATP binding"/>
    <property type="evidence" value="ECO:0007669"/>
    <property type="project" value="UniProtKB-UniRule"/>
</dbReference>
<dbReference type="GO" id="GO:0000287">
    <property type="term" value="F:magnesium ion binding"/>
    <property type="evidence" value="ECO:0007669"/>
    <property type="project" value="UniProtKB-UniRule"/>
</dbReference>
<dbReference type="GO" id="GO:0047482">
    <property type="term" value="F:UDP-N-acetylmuramoyl-L-alanyl-D-glutamate-L-lysine ligase activity"/>
    <property type="evidence" value="ECO:0007669"/>
    <property type="project" value="UniProtKB-UniRule"/>
</dbReference>
<dbReference type="GO" id="GO:0051301">
    <property type="term" value="P:cell division"/>
    <property type="evidence" value="ECO:0007669"/>
    <property type="project" value="UniProtKB-KW"/>
</dbReference>
<dbReference type="GO" id="GO:0071555">
    <property type="term" value="P:cell wall organization"/>
    <property type="evidence" value="ECO:0007669"/>
    <property type="project" value="UniProtKB-KW"/>
</dbReference>
<dbReference type="GO" id="GO:0009252">
    <property type="term" value="P:peptidoglycan biosynthetic process"/>
    <property type="evidence" value="ECO:0007669"/>
    <property type="project" value="UniProtKB-UniRule"/>
</dbReference>
<dbReference type="GO" id="GO:0008360">
    <property type="term" value="P:regulation of cell shape"/>
    <property type="evidence" value="ECO:0007669"/>
    <property type="project" value="UniProtKB-KW"/>
</dbReference>
<dbReference type="Gene3D" id="3.90.190.20">
    <property type="entry name" value="Mur ligase, C-terminal domain"/>
    <property type="match status" value="1"/>
</dbReference>
<dbReference type="Gene3D" id="3.40.1190.10">
    <property type="entry name" value="Mur-like, catalytic domain"/>
    <property type="match status" value="1"/>
</dbReference>
<dbReference type="Gene3D" id="3.40.1390.10">
    <property type="entry name" value="MurE/MurF, N-terminal domain"/>
    <property type="match status" value="1"/>
</dbReference>
<dbReference type="HAMAP" id="MF_00208">
    <property type="entry name" value="MurE"/>
    <property type="match status" value="1"/>
</dbReference>
<dbReference type="InterPro" id="IPR036565">
    <property type="entry name" value="Mur-like_cat_sf"/>
</dbReference>
<dbReference type="InterPro" id="IPR004101">
    <property type="entry name" value="Mur_ligase_C"/>
</dbReference>
<dbReference type="InterPro" id="IPR036615">
    <property type="entry name" value="Mur_ligase_C_dom_sf"/>
</dbReference>
<dbReference type="InterPro" id="IPR013221">
    <property type="entry name" value="Mur_ligase_cen"/>
</dbReference>
<dbReference type="InterPro" id="IPR035911">
    <property type="entry name" value="MurE/MurF_N"/>
</dbReference>
<dbReference type="InterPro" id="IPR005761">
    <property type="entry name" value="UDP-N-AcMur-Glu-dNH2Pim_ligase"/>
</dbReference>
<dbReference type="NCBIfam" id="TIGR01085">
    <property type="entry name" value="murE"/>
    <property type="match status" value="1"/>
</dbReference>
<dbReference type="NCBIfam" id="NF010628">
    <property type="entry name" value="PRK14022.1"/>
    <property type="match status" value="1"/>
</dbReference>
<dbReference type="PANTHER" id="PTHR23135">
    <property type="entry name" value="MUR LIGASE FAMILY MEMBER"/>
    <property type="match status" value="1"/>
</dbReference>
<dbReference type="PANTHER" id="PTHR23135:SF4">
    <property type="entry name" value="UDP-N-ACETYLMURAMOYL-L-ALANYL-D-GLUTAMATE--2,6-DIAMINOPIMELATE LIGASE MURE HOMOLOG, CHLOROPLASTIC"/>
    <property type="match status" value="1"/>
</dbReference>
<dbReference type="Pfam" id="PF02875">
    <property type="entry name" value="Mur_ligase_C"/>
    <property type="match status" value="1"/>
</dbReference>
<dbReference type="Pfam" id="PF08245">
    <property type="entry name" value="Mur_ligase_M"/>
    <property type="match status" value="1"/>
</dbReference>
<dbReference type="SUPFAM" id="SSF53623">
    <property type="entry name" value="MurD-like peptide ligases, catalytic domain"/>
    <property type="match status" value="1"/>
</dbReference>
<dbReference type="SUPFAM" id="SSF53244">
    <property type="entry name" value="MurD-like peptide ligases, peptide-binding domain"/>
    <property type="match status" value="1"/>
</dbReference>
<dbReference type="SUPFAM" id="SSF63418">
    <property type="entry name" value="MurE/MurF N-terminal domain"/>
    <property type="match status" value="1"/>
</dbReference>
<evidence type="ECO:0000255" key="1">
    <source>
        <dbReference type="HAMAP-Rule" id="MF_00208"/>
    </source>
</evidence>
<accession>Q838A4</accession>
<gene>
    <name evidence="1" type="primary">murE</name>
    <name type="ordered locus">EF_0668</name>
</gene>
<sequence>MTISLFAIRDCLEKEDLLKEFISPEGWHLTLSDTLGQREVTALSYDSRDVTAETLFFCKGLNFKEIYLENAVKDGLEIYVSEVPYEVPAQLGIIVTDIKKAMAVLSMAFYDYPQNKLKLIGFTGTKGKTTAAYFTKYILDVATQQKTALLSTMNSTLDGKTFFKSALTTPESLDLYRMMATAVANGMTHFIMEVSSQAYKTNRVYKLFFDVGIFLNITPDHISPIEHPTFDDYFYCKRQLITHSKVIVLNHEADYFPLLKETAQQQKVPAIVYGSQPAPEVDYSFAVSSEDSLRFIVESPADALGLAGSYHLRLGGDFNKGNALSAAIASVLVGASKEECQQGIAATTVPGRMESLTNTNGATVYVDYAHNYDSLKNLLTFVREEHPDGRLIVLVGSTGDKAISRRKDFGRVLSELADVAVLTTDDPASEDPAKICQEIQAHITKEMPVYTVLDRGEAIAHALSLSTTADDAIVLAGKGADLYQKVNGVDEPYAGDFALAEAFINKKN</sequence>
<name>MURE_ENTFA</name>
<feature type="chain" id="PRO_0000101896" description="UDP-N-acetylmuramoyl-L-alanyl-D-glutamate--L-lysine ligase">
    <location>
        <begin position="1"/>
        <end position="508"/>
    </location>
</feature>
<feature type="short sequence motif" description="L-lysine recognition motif">
    <location>
        <begin position="425"/>
        <end position="428"/>
    </location>
</feature>
<feature type="binding site" evidence="1">
    <location>
        <position position="47"/>
    </location>
    <ligand>
        <name>UDP-N-acetyl-alpha-D-muramoyl-L-alanyl-D-glutamate</name>
        <dbReference type="ChEBI" id="CHEBI:83900"/>
    </ligand>
</feature>
<feature type="binding site" evidence="1">
    <location>
        <begin position="124"/>
        <end position="130"/>
    </location>
    <ligand>
        <name>ATP</name>
        <dbReference type="ChEBI" id="CHEBI:30616"/>
    </ligand>
</feature>
<feature type="binding site" evidence="1">
    <location>
        <begin position="168"/>
        <end position="169"/>
    </location>
    <ligand>
        <name>UDP-N-acetyl-alpha-D-muramoyl-L-alanyl-D-glutamate</name>
        <dbReference type="ChEBI" id="CHEBI:83900"/>
    </ligand>
</feature>
<feature type="binding site" evidence="1">
    <location>
        <position position="195"/>
    </location>
    <ligand>
        <name>UDP-N-acetyl-alpha-D-muramoyl-L-alanyl-D-glutamate</name>
        <dbReference type="ChEBI" id="CHEBI:83900"/>
    </ligand>
</feature>
<feature type="binding site" evidence="1">
    <location>
        <position position="203"/>
    </location>
    <ligand>
        <name>UDP-N-acetyl-alpha-D-muramoyl-L-alanyl-D-glutamate</name>
        <dbReference type="ChEBI" id="CHEBI:83900"/>
    </ligand>
</feature>
<feature type="modified residue" description="N6-carboxylysine" evidence="1">
    <location>
        <position position="237"/>
    </location>
</feature>
<reference key="1">
    <citation type="journal article" date="2003" name="Science">
        <title>Role of mobile DNA in the evolution of vancomycin-resistant Enterococcus faecalis.</title>
        <authorList>
            <person name="Paulsen I.T."/>
            <person name="Banerjei L."/>
            <person name="Myers G.S.A."/>
            <person name="Nelson K.E."/>
            <person name="Seshadri R."/>
            <person name="Read T.D."/>
            <person name="Fouts D.E."/>
            <person name="Eisen J.A."/>
            <person name="Gill S.R."/>
            <person name="Heidelberg J.F."/>
            <person name="Tettelin H."/>
            <person name="Dodson R.J."/>
            <person name="Umayam L.A."/>
            <person name="Brinkac L.M."/>
            <person name="Beanan M.J."/>
            <person name="Daugherty S.C."/>
            <person name="DeBoy R.T."/>
            <person name="Durkin S.A."/>
            <person name="Kolonay J.F."/>
            <person name="Madupu R."/>
            <person name="Nelson W.C."/>
            <person name="Vamathevan J.J."/>
            <person name="Tran B."/>
            <person name="Upton J."/>
            <person name="Hansen T."/>
            <person name="Shetty J."/>
            <person name="Khouri H.M."/>
            <person name="Utterback T.R."/>
            <person name="Radune D."/>
            <person name="Ketchum K.A."/>
            <person name="Dougherty B.A."/>
            <person name="Fraser C.M."/>
        </authorList>
    </citation>
    <scope>NUCLEOTIDE SEQUENCE [LARGE SCALE GENOMIC DNA]</scope>
    <source>
        <strain>ATCC 700802 / V583</strain>
    </source>
</reference>
<organism>
    <name type="scientific">Enterococcus faecalis (strain ATCC 700802 / V583)</name>
    <dbReference type="NCBI Taxonomy" id="226185"/>
    <lineage>
        <taxon>Bacteria</taxon>
        <taxon>Bacillati</taxon>
        <taxon>Bacillota</taxon>
        <taxon>Bacilli</taxon>
        <taxon>Lactobacillales</taxon>
        <taxon>Enterococcaceae</taxon>
        <taxon>Enterococcus</taxon>
    </lineage>
</organism>
<protein>
    <recommendedName>
        <fullName evidence="1">UDP-N-acetylmuramoyl-L-alanyl-D-glutamate--L-lysine ligase</fullName>
        <ecNumber evidence="1">6.3.2.7</ecNumber>
    </recommendedName>
    <alternativeName>
        <fullName evidence="1">L-lysine-adding enzyme</fullName>
    </alternativeName>
    <alternativeName>
        <fullName evidence="1">UDP-MurNAc-L-Ala-D-Glu:L-Lys ligase</fullName>
    </alternativeName>
    <alternativeName>
        <fullName evidence="1">UDP-MurNAc-tripeptide synthetase</fullName>
    </alternativeName>
    <alternativeName>
        <fullName evidence="1">UDP-N-acetylmuramyl-tripeptide synthetase</fullName>
    </alternativeName>
</protein>